<sequence length="149" mass="16619">MVSHLKKTRKLRGHVSHGHGRVGKHRKGGCRGGRGKAGGMHHHRILMEKWHPGYYGKLGMRTFHLKKNPLHCPVVNIDKLWSLVSDATRQKYAEDKKKVPVIDVTKAGFFKVLGKGRLPNQPVVVKAKYFSKTAERRIVAVGGACVLTA</sequence>
<protein>
    <recommendedName>
        <fullName evidence="2">Large ribosomal subunit protein uL15</fullName>
    </recommendedName>
    <alternativeName>
        <fullName>60S ribosomal protein L27a</fullName>
    </alternativeName>
</protein>
<keyword id="KW-0002">3D-structure</keyword>
<keyword id="KW-0687">Ribonucleoprotein</keyword>
<keyword id="KW-0689">Ribosomal protein</keyword>
<gene>
    <name type="primary">RPL27A</name>
    <name type="synonym">RPL28</name>
</gene>
<evidence type="ECO:0000256" key="1">
    <source>
        <dbReference type="SAM" id="MobiDB-lite"/>
    </source>
</evidence>
<evidence type="ECO:0000305" key="2"/>
<organism>
    <name type="scientific">Tetrahymena thermophila</name>
    <dbReference type="NCBI Taxonomy" id="5911"/>
    <lineage>
        <taxon>Eukaryota</taxon>
        <taxon>Sar</taxon>
        <taxon>Alveolata</taxon>
        <taxon>Ciliophora</taxon>
        <taxon>Intramacronucleata</taxon>
        <taxon>Oligohymenophorea</taxon>
        <taxon>Hymenostomatida</taxon>
        <taxon>Tetrahymenina</taxon>
        <taxon>Tetrahymenidae</taxon>
        <taxon>Tetrahymena</taxon>
    </lineage>
</organism>
<accession>Q00454</accession>
<comment type="similarity">
    <text evidence="2">Belongs to the universal ribosomal protein uL15 family.</text>
</comment>
<dbReference type="EMBL" id="M76718">
    <property type="protein sequence ID" value="AAA30124.1"/>
    <property type="molecule type" value="mRNA"/>
</dbReference>
<dbReference type="EMBL" id="M76719">
    <property type="protein sequence ID" value="AAA30125.1"/>
    <property type="molecule type" value="Genomic_DNA"/>
</dbReference>
<dbReference type="PIR" id="A56403">
    <property type="entry name" value="A56403"/>
</dbReference>
<dbReference type="PDB" id="4V8P">
    <property type="method" value="X-ray"/>
    <property type="resolution" value="3.52 A"/>
    <property type="chains" value="BK/CK/EK/GK=1-149"/>
</dbReference>
<dbReference type="PDBsum" id="4V8P"/>
<dbReference type="SMR" id="Q00454"/>
<dbReference type="IntAct" id="Q00454">
    <property type="interactions" value="1"/>
</dbReference>
<dbReference type="GO" id="GO:0022625">
    <property type="term" value="C:cytosolic large ribosomal subunit"/>
    <property type="evidence" value="ECO:0007669"/>
    <property type="project" value="TreeGrafter"/>
</dbReference>
<dbReference type="GO" id="GO:0003735">
    <property type="term" value="F:structural constituent of ribosome"/>
    <property type="evidence" value="ECO:0007669"/>
    <property type="project" value="InterPro"/>
</dbReference>
<dbReference type="GO" id="GO:0006412">
    <property type="term" value="P:translation"/>
    <property type="evidence" value="ECO:0007669"/>
    <property type="project" value="InterPro"/>
</dbReference>
<dbReference type="FunFam" id="3.100.10.10:FF:000002">
    <property type="entry name" value="60S ribosomal protein L27a"/>
    <property type="match status" value="1"/>
</dbReference>
<dbReference type="Gene3D" id="3.100.10.10">
    <property type="match status" value="1"/>
</dbReference>
<dbReference type="Gene3D" id="4.10.990.10">
    <property type="match status" value="1"/>
</dbReference>
<dbReference type="HAMAP" id="MF_01341">
    <property type="entry name" value="Ribosomal_uL15"/>
    <property type="match status" value="1"/>
</dbReference>
<dbReference type="InterPro" id="IPR027386">
    <property type="entry name" value="Rbsml_uL15_N"/>
</dbReference>
<dbReference type="InterPro" id="IPR030878">
    <property type="entry name" value="Ribosomal_uL15"/>
</dbReference>
<dbReference type="InterPro" id="IPR021131">
    <property type="entry name" value="Ribosomal_uL15/eL18"/>
</dbReference>
<dbReference type="InterPro" id="IPR036227">
    <property type="entry name" value="Ribosomal_uL15/eL18_sf"/>
</dbReference>
<dbReference type="InterPro" id="IPR001196">
    <property type="entry name" value="Ribosomal_uL15_CS"/>
</dbReference>
<dbReference type="PANTHER" id="PTHR11721">
    <property type="entry name" value="60S RIBOSOMAL PROTEIN L27A"/>
    <property type="match status" value="1"/>
</dbReference>
<dbReference type="PANTHER" id="PTHR11721:SF3">
    <property type="entry name" value="LARGE RIBOSOMAL SUBUNIT PROTEIN UL15"/>
    <property type="match status" value="1"/>
</dbReference>
<dbReference type="Pfam" id="PF00828">
    <property type="entry name" value="Ribosomal_L27A"/>
    <property type="match status" value="1"/>
</dbReference>
<dbReference type="SUPFAM" id="SSF52080">
    <property type="entry name" value="Ribosomal proteins L15p and L18e"/>
    <property type="match status" value="1"/>
</dbReference>
<dbReference type="PROSITE" id="PS00475">
    <property type="entry name" value="RIBOSOMAL_L15"/>
    <property type="match status" value="1"/>
</dbReference>
<proteinExistence type="evidence at protein level"/>
<feature type="chain" id="PRO_0000104895" description="Large ribosomal subunit protein uL15">
    <location>
        <begin position="1"/>
        <end position="149"/>
    </location>
</feature>
<feature type="region of interest" description="Disordered" evidence="1">
    <location>
        <begin position="1"/>
        <end position="38"/>
    </location>
</feature>
<feature type="compositionally biased region" description="Basic residues" evidence="1">
    <location>
        <begin position="1"/>
        <end position="29"/>
    </location>
</feature>
<feature type="mutagenesis site" description="Confers cycloheximide resistance.">
    <original>M</original>
    <variation>K</variation>
    <variation>E</variation>
    <location>
        <position position="40"/>
    </location>
</feature>
<feature type="sequence conflict" description="In Ref. 1; AAA30125." evidence="2" ref="1">
    <original>SLVS</original>
    <variation>RKET</variation>
    <location>
        <begin position="82"/>
        <end position="85"/>
    </location>
</feature>
<reference key="1">
    <citation type="journal article" date="1991" name="Proc. Natl. Acad. Sci. U.S.A.">
        <title>Transformation of Tetrahymena to cycloheximide resistance with a ribosomal protein gene through sequence replacement.</title>
        <authorList>
            <person name="Yao M.-C."/>
            <person name="Yao C.-H."/>
        </authorList>
    </citation>
    <scope>NUCLEOTIDE SEQUENCE [GENOMIC DNA / MRNA]</scope>
</reference>
<reference key="2">
    <citation type="journal article" date="2011" name="Science">
        <title>Crystal structure of the eukaryotic 60S ribosomal subunit in complex with initiation factor 6.</title>
        <authorList>
            <person name="Klinge S."/>
            <person name="Voigts-Hoffmann F."/>
            <person name="Leibundgut M."/>
            <person name="Arpagaus S."/>
            <person name="Ban N."/>
        </authorList>
    </citation>
    <scope>X-RAY CRYSTALLOGRAPHY (3.52 ANGSTROMS) OF 60S RIBOSOME</scope>
</reference>
<name>RL27A_TETTH</name>